<reference key="1">
    <citation type="journal article" date="2004" name="Nature">
        <title>Genome evolution in yeasts.</title>
        <authorList>
            <person name="Dujon B."/>
            <person name="Sherman D."/>
            <person name="Fischer G."/>
            <person name="Durrens P."/>
            <person name="Casaregola S."/>
            <person name="Lafontaine I."/>
            <person name="de Montigny J."/>
            <person name="Marck C."/>
            <person name="Neuveglise C."/>
            <person name="Talla E."/>
            <person name="Goffard N."/>
            <person name="Frangeul L."/>
            <person name="Aigle M."/>
            <person name="Anthouard V."/>
            <person name="Babour A."/>
            <person name="Barbe V."/>
            <person name="Barnay S."/>
            <person name="Blanchin S."/>
            <person name="Beckerich J.-M."/>
            <person name="Beyne E."/>
            <person name="Bleykasten C."/>
            <person name="Boisrame A."/>
            <person name="Boyer J."/>
            <person name="Cattolico L."/>
            <person name="Confanioleri F."/>
            <person name="de Daruvar A."/>
            <person name="Despons L."/>
            <person name="Fabre E."/>
            <person name="Fairhead C."/>
            <person name="Ferry-Dumazet H."/>
            <person name="Groppi A."/>
            <person name="Hantraye F."/>
            <person name="Hennequin C."/>
            <person name="Jauniaux N."/>
            <person name="Joyet P."/>
            <person name="Kachouri R."/>
            <person name="Kerrest A."/>
            <person name="Koszul R."/>
            <person name="Lemaire M."/>
            <person name="Lesur I."/>
            <person name="Ma L."/>
            <person name="Muller H."/>
            <person name="Nicaud J.-M."/>
            <person name="Nikolski M."/>
            <person name="Oztas S."/>
            <person name="Ozier-Kalogeropoulos O."/>
            <person name="Pellenz S."/>
            <person name="Potier S."/>
            <person name="Richard G.-F."/>
            <person name="Straub M.-L."/>
            <person name="Suleau A."/>
            <person name="Swennen D."/>
            <person name="Tekaia F."/>
            <person name="Wesolowski-Louvel M."/>
            <person name="Westhof E."/>
            <person name="Wirth B."/>
            <person name="Zeniou-Meyer M."/>
            <person name="Zivanovic Y."/>
            <person name="Bolotin-Fukuhara M."/>
            <person name="Thierry A."/>
            <person name="Bouchier C."/>
            <person name="Caudron B."/>
            <person name="Scarpelli C."/>
            <person name="Gaillardin C."/>
            <person name="Weissenbach J."/>
            <person name="Wincker P."/>
            <person name="Souciet J.-L."/>
        </authorList>
    </citation>
    <scope>NUCLEOTIDE SEQUENCE [LARGE SCALE GENOMIC DNA]</scope>
    <source>
        <strain>ATCC 36239 / CBS 767 / BCRC 21394 / JCM 1990 / NBRC 0083 / IGC 2968</strain>
    </source>
</reference>
<name>GON7_DEBHA</name>
<sequence length="110" mass="12293">MLDPLVPTAVYKAPDFTEGQKFHPGEGPHTTNGKTTQISDIVIKAGGEDRDKPSDAKDTQLGQLRAKLTTLQDQLNIFLTKRMDHEKSRSQEEKDLERQVLDEGVDDDSD</sequence>
<protein>
    <recommendedName>
        <fullName>EKC/KEOPS complex subunit GON7</fullName>
    </recommendedName>
</protein>
<feature type="chain" id="PRO_0000278922" description="EKC/KEOPS complex subunit GON7">
    <location>
        <begin position="1"/>
        <end position="110"/>
    </location>
</feature>
<feature type="region of interest" description="Disordered" evidence="2">
    <location>
        <begin position="16"/>
        <end position="37"/>
    </location>
</feature>
<feature type="region of interest" description="Disordered" evidence="2">
    <location>
        <begin position="82"/>
        <end position="110"/>
    </location>
</feature>
<feature type="compositionally biased region" description="Basic and acidic residues" evidence="2">
    <location>
        <begin position="82"/>
        <end position="101"/>
    </location>
</feature>
<evidence type="ECO:0000250" key="1"/>
<evidence type="ECO:0000256" key="2">
    <source>
        <dbReference type="SAM" id="MobiDB-lite"/>
    </source>
</evidence>
<evidence type="ECO:0000305" key="3"/>
<organism>
    <name type="scientific">Debaryomyces hansenii (strain ATCC 36239 / CBS 767 / BCRC 21394 / JCM 1990 / NBRC 0083 / IGC 2968)</name>
    <name type="common">Yeast</name>
    <name type="synonym">Torulaspora hansenii</name>
    <dbReference type="NCBI Taxonomy" id="284592"/>
    <lineage>
        <taxon>Eukaryota</taxon>
        <taxon>Fungi</taxon>
        <taxon>Dikarya</taxon>
        <taxon>Ascomycota</taxon>
        <taxon>Saccharomycotina</taxon>
        <taxon>Pichiomycetes</taxon>
        <taxon>Debaryomycetaceae</taxon>
        <taxon>Debaryomyces</taxon>
    </lineage>
</organism>
<keyword id="KW-0010">Activator</keyword>
<keyword id="KW-0158">Chromosome</keyword>
<keyword id="KW-0539">Nucleus</keyword>
<keyword id="KW-1185">Reference proteome</keyword>
<keyword id="KW-0779">Telomere</keyword>
<keyword id="KW-0804">Transcription</keyword>
<keyword id="KW-0805">Transcription regulation</keyword>
<keyword id="KW-0819">tRNA processing</keyword>
<dbReference type="EMBL" id="CR382135">
    <property type="protein sequence ID" value="CAG85807.1"/>
    <property type="molecule type" value="Genomic_DNA"/>
</dbReference>
<dbReference type="RefSeq" id="XP_457771.1">
    <property type="nucleotide sequence ID" value="XM_457771.1"/>
</dbReference>
<dbReference type="SMR" id="Q6BVJ8"/>
<dbReference type="FunCoup" id="Q6BVJ8">
    <property type="interactions" value="30"/>
</dbReference>
<dbReference type="STRING" id="284592.Q6BVJ8"/>
<dbReference type="GeneID" id="2900748"/>
<dbReference type="KEGG" id="dha:DEHA2C02090g"/>
<dbReference type="VEuPathDB" id="FungiDB:DEHA2C02090g"/>
<dbReference type="eggNOG" id="ENOG502S429">
    <property type="taxonomic scope" value="Eukaryota"/>
</dbReference>
<dbReference type="HOGENOM" id="CLU_151420_0_0_1"/>
<dbReference type="InParanoid" id="Q6BVJ8"/>
<dbReference type="OMA" id="QDHLNIF"/>
<dbReference type="OrthoDB" id="2288868at2759"/>
<dbReference type="Proteomes" id="UP000000599">
    <property type="component" value="Chromosome C"/>
</dbReference>
<dbReference type="GO" id="GO:0000781">
    <property type="term" value="C:chromosome, telomeric region"/>
    <property type="evidence" value="ECO:0007669"/>
    <property type="project" value="UniProtKB-SubCell"/>
</dbReference>
<dbReference type="GO" id="GO:0005634">
    <property type="term" value="C:nucleus"/>
    <property type="evidence" value="ECO:0007669"/>
    <property type="project" value="UniProtKB-SubCell"/>
</dbReference>
<dbReference type="GO" id="GO:0008033">
    <property type="term" value="P:tRNA processing"/>
    <property type="evidence" value="ECO:0007669"/>
    <property type="project" value="UniProtKB-KW"/>
</dbReference>
<dbReference type="InterPro" id="IPR014849">
    <property type="entry name" value="EKC/KEOPS_Gon7"/>
</dbReference>
<dbReference type="Pfam" id="PF08738">
    <property type="entry name" value="Gon7"/>
    <property type="match status" value="1"/>
</dbReference>
<proteinExistence type="inferred from homology"/>
<accession>Q6BVJ8</accession>
<gene>
    <name type="primary">GON7</name>
    <name type="ordered locus">DEHA2C02090g</name>
</gene>
<comment type="function">
    <text evidence="1">Component of the EKC/KEOPS complex that is required for the formation of a threonylcarbamoyl group on adenosine at position 37 (t(6)A37) in tRNAs that read codons beginning with adenine. The complex is probably involved in the transfer of the threonylcarbamoyl moiety of threonylcarbamoyl-AMP (TC-AMP) to the N6 group of A37. GON7 likely plays a supporting role to the catalytic subunit KAE1 in the complex. The EKC/KEOPS complex also promotes both telomere uncapping and telomere elongation. The complex is required for efficient recruitment of transcriptional coactivators (By similarity).</text>
</comment>
<comment type="subunit">
    <text evidence="1">Component of the EKC/KEOPS complex composed of at least BUD32, CGI121, GON7, KAE1 and PCC1; the whole complex dimerizes.</text>
</comment>
<comment type="subcellular location">
    <subcellularLocation>
        <location evidence="1">Nucleus</location>
    </subcellularLocation>
    <subcellularLocation>
        <location evidence="1">Chromosome</location>
        <location evidence="1">Telomere</location>
    </subcellularLocation>
</comment>
<comment type="similarity">
    <text evidence="3">Belongs to the GON7 family.</text>
</comment>